<comment type="function">
    <text evidence="1">This protein is one of the early assembly proteins of the 50S ribosomal subunit, although it is not seen to bind rRNA by itself. It is important during the early stages of 50S assembly.</text>
</comment>
<comment type="subunit">
    <text evidence="1">Part of the 50S ribosomal subunit.</text>
</comment>
<comment type="similarity">
    <text evidence="1">Belongs to the universal ribosomal protein uL13 family.</text>
</comment>
<proteinExistence type="inferred from homology"/>
<protein>
    <recommendedName>
        <fullName evidence="1">Large ribosomal subunit protein uL13</fullName>
    </recommendedName>
    <alternativeName>
        <fullName evidence="2">50S ribosomal protein L13</fullName>
    </alternativeName>
</protein>
<reference key="1">
    <citation type="journal article" date="2004" name="Nucleic Acids Res.">
        <title>Genome sequence of Symbiobacterium thermophilum, an uncultivable bacterium that depends on microbial commensalism.</title>
        <authorList>
            <person name="Ueda K."/>
            <person name="Yamashita A."/>
            <person name="Ishikawa J."/>
            <person name="Shimada M."/>
            <person name="Watsuji T."/>
            <person name="Morimura K."/>
            <person name="Ikeda H."/>
            <person name="Hattori M."/>
            <person name="Beppu T."/>
        </authorList>
    </citation>
    <scope>NUCLEOTIDE SEQUENCE [LARGE SCALE GENOMIC DNA]</scope>
    <source>
        <strain>DSM 24528 / JCM 14929 / IAM 14863 / T</strain>
    </source>
</reference>
<accession>Q67JX6</accession>
<sequence>MNKTYMANPQNVERKWYVVDAEGKTLGRLASKVAAILRGKHKPTFTPHVDCGDFVIIVNAEKIQVTGKKVTDKVYYRHSGYPGGQKATTFEQMIARRPERVLELAIKGMLPHNRLGRQMYRKLKVYAGPEHPHAAQKPEPLEV</sequence>
<gene>
    <name evidence="1" type="primary">rplM</name>
    <name type="ordered locus">STH3041</name>
</gene>
<evidence type="ECO:0000255" key="1">
    <source>
        <dbReference type="HAMAP-Rule" id="MF_01366"/>
    </source>
</evidence>
<evidence type="ECO:0000305" key="2"/>
<feature type="chain" id="PRO_0000261805" description="Large ribosomal subunit protein uL13">
    <location>
        <begin position="1"/>
        <end position="143"/>
    </location>
</feature>
<dbReference type="EMBL" id="AP006840">
    <property type="protein sequence ID" value="BAD42024.1"/>
    <property type="molecule type" value="Genomic_DNA"/>
</dbReference>
<dbReference type="SMR" id="Q67JX6"/>
<dbReference type="STRING" id="292459.STH3041"/>
<dbReference type="KEGG" id="sth:STH3041"/>
<dbReference type="eggNOG" id="COG0102">
    <property type="taxonomic scope" value="Bacteria"/>
</dbReference>
<dbReference type="HOGENOM" id="CLU_082184_2_2_9"/>
<dbReference type="OrthoDB" id="9801330at2"/>
<dbReference type="Proteomes" id="UP000000417">
    <property type="component" value="Chromosome"/>
</dbReference>
<dbReference type="GO" id="GO:0022625">
    <property type="term" value="C:cytosolic large ribosomal subunit"/>
    <property type="evidence" value="ECO:0007669"/>
    <property type="project" value="TreeGrafter"/>
</dbReference>
<dbReference type="GO" id="GO:0003729">
    <property type="term" value="F:mRNA binding"/>
    <property type="evidence" value="ECO:0007669"/>
    <property type="project" value="TreeGrafter"/>
</dbReference>
<dbReference type="GO" id="GO:0003735">
    <property type="term" value="F:structural constituent of ribosome"/>
    <property type="evidence" value="ECO:0007669"/>
    <property type="project" value="InterPro"/>
</dbReference>
<dbReference type="GO" id="GO:0017148">
    <property type="term" value="P:negative regulation of translation"/>
    <property type="evidence" value="ECO:0007669"/>
    <property type="project" value="TreeGrafter"/>
</dbReference>
<dbReference type="GO" id="GO:0006412">
    <property type="term" value="P:translation"/>
    <property type="evidence" value="ECO:0007669"/>
    <property type="project" value="UniProtKB-UniRule"/>
</dbReference>
<dbReference type="CDD" id="cd00392">
    <property type="entry name" value="Ribosomal_L13"/>
    <property type="match status" value="1"/>
</dbReference>
<dbReference type="FunFam" id="3.90.1180.10:FF:000001">
    <property type="entry name" value="50S ribosomal protein L13"/>
    <property type="match status" value="1"/>
</dbReference>
<dbReference type="Gene3D" id="3.90.1180.10">
    <property type="entry name" value="Ribosomal protein L13"/>
    <property type="match status" value="1"/>
</dbReference>
<dbReference type="HAMAP" id="MF_01366">
    <property type="entry name" value="Ribosomal_uL13"/>
    <property type="match status" value="1"/>
</dbReference>
<dbReference type="InterPro" id="IPR005822">
    <property type="entry name" value="Ribosomal_uL13"/>
</dbReference>
<dbReference type="InterPro" id="IPR005823">
    <property type="entry name" value="Ribosomal_uL13_bac-type"/>
</dbReference>
<dbReference type="InterPro" id="IPR023563">
    <property type="entry name" value="Ribosomal_uL13_CS"/>
</dbReference>
<dbReference type="InterPro" id="IPR036899">
    <property type="entry name" value="Ribosomal_uL13_sf"/>
</dbReference>
<dbReference type="NCBIfam" id="TIGR01066">
    <property type="entry name" value="rplM_bact"/>
    <property type="match status" value="1"/>
</dbReference>
<dbReference type="PANTHER" id="PTHR11545:SF2">
    <property type="entry name" value="LARGE RIBOSOMAL SUBUNIT PROTEIN UL13M"/>
    <property type="match status" value="1"/>
</dbReference>
<dbReference type="PANTHER" id="PTHR11545">
    <property type="entry name" value="RIBOSOMAL PROTEIN L13"/>
    <property type="match status" value="1"/>
</dbReference>
<dbReference type="Pfam" id="PF00572">
    <property type="entry name" value="Ribosomal_L13"/>
    <property type="match status" value="1"/>
</dbReference>
<dbReference type="PIRSF" id="PIRSF002181">
    <property type="entry name" value="Ribosomal_L13"/>
    <property type="match status" value="1"/>
</dbReference>
<dbReference type="SUPFAM" id="SSF52161">
    <property type="entry name" value="Ribosomal protein L13"/>
    <property type="match status" value="1"/>
</dbReference>
<dbReference type="PROSITE" id="PS00783">
    <property type="entry name" value="RIBOSOMAL_L13"/>
    <property type="match status" value="1"/>
</dbReference>
<organism>
    <name type="scientific">Symbiobacterium thermophilum (strain DSM 24528 / JCM 14929 / IAM 14863 / T)</name>
    <dbReference type="NCBI Taxonomy" id="292459"/>
    <lineage>
        <taxon>Bacteria</taxon>
        <taxon>Bacillati</taxon>
        <taxon>Bacillota</taxon>
        <taxon>Clostridia</taxon>
        <taxon>Eubacteriales</taxon>
        <taxon>Symbiobacteriaceae</taxon>
        <taxon>Symbiobacterium</taxon>
    </lineage>
</organism>
<keyword id="KW-1185">Reference proteome</keyword>
<keyword id="KW-0687">Ribonucleoprotein</keyword>
<keyword id="KW-0689">Ribosomal protein</keyword>
<name>RL13_SYMTH</name>